<sequence>MIKPLLAVMIGGCAGCVIRWLLAVRLNAWFPNLPPGTLLVNLVGGLIIGATVAWFARYPGIDPNWKLLITTGLCGGMTTFSTFSLEVVTLLQAGNYLWAVISVLTHVTGSLLMTIAGFWLVSLLF</sequence>
<proteinExistence type="inferred from homology"/>
<feature type="chain" id="PRO_1000125129" description="Fluoride-specific ion channel FluC">
    <location>
        <begin position="1"/>
        <end position="125"/>
    </location>
</feature>
<feature type="transmembrane region" description="Helical" evidence="1">
    <location>
        <begin position="4"/>
        <end position="24"/>
    </location>
</feature>
<feature type="transmembrane region" description="Helical" evidence="1">
    <location>
        <begin position="36"/>
        <end position="56"/>
    </location>
</feature>
<feature type="transmembrane region" description="Helical" evidence="1">
    <location>
        <begin position="68"/>
        <end position="88"/>
    </location>
</feature>
<feature type="transmembrane region" description="Helical" evidence="1">
    <location>
        <begin position="100"/>
        <end position="120"/>
    </location>
</feature>
<feature type="binding site" evidence="1">
    <location>
        <position position="75"/>
    </location>
    <ligand>
        <name>Na(+)</name>
        <dbReference type="ChEBI" id="CHEBI:29101"/>
        <note>structural</note>
    </ligand>
</feature>
<feature type="binding site" evidence="1">
    <location>
        <position position="78"/>
    </location>
    <ligand>
        <name>Na(+)</name>
        <dbReference type="ChEBI" id="CHEBI:29101"/>
        <note>structural</note>
    </ligand>
</feature>
<keyword id="KW-0997">Cell inner membrane</keyword>
<keyword id="KW-1003">Cell membrane</keyword>
<keyword id="KW-0407">Ion channel</keyword>
<keyword id="KW-0406">Ion transport</keyword>
<keyword id="KW-0472">Membrane</keyword>
<keyword id="KW-0479">Metal-binding</keyword>
<keyword id="KW-1185">Reference proteome</keyword>
<keyword id="KW-0915">Sodium</keyword>
<keyword id="KW-0812">Transmembrane</keyword>
<keyword id="KW-1133">Transmembrane helix</keyword>
<keyword id="KW-0813">Transport</keyword>
<accession>B2VHL9</accession>
<comment type="function">
    <text evidence="1">Fluoride-specific ion channel. Important for reducing fluoride concentration in the cell, thus reducing its toxicity.</text>
</comment>
<comment type="catalytic activity">
    <reaction evidence="1">
        <text>fluoride(in) = fluoride(out)</text>
        <dbReference type="Rhea" id="RHEA:76159"/>
        <dbReference type="ChEBI" id="CHEBI:17051"/>
    </reaction>
    <physiologicalReaction direction="left-to-right" evidence="1">
        <dbReference type="Rhea" id="RHEA:76160"/>
    </physiologicalReaction>
</comment>
<comment type="activity regulation">
    <text evidence="1">Na(+) is not transported, but it plays an essential structural role and its presence is essential for fluoride channel function.</text>
</comment>
<comment type="subcellular location">
    <subcellularLocation>
        <location evidence="1">Cell inner membrane</location>
        <topology evidence="1">Multi-pass membrane protein</topology>
    </subcellularLocation>
</comment>
<comment type="similarity">
    <text evidence="1">Belongs to the fluoride channel Fluc/FEX (TC 1.A.43) family.</text>
</comment>
<name>FLUC_ERWT9</name>
<organism>
    <name type="scientific">Erwinia tasmaniensis (strain DSM 17950 / CFBP 7177 / CIP 109463 / NCPPB 4357 / Et1/99)</name>
    <dbReference type="NCBI Taxonomy" id="465817"/>
    <lineage>
        <taxon>Bacteria</taxon>
        <taxon>Pseudomonadati</taxon>
        <taxon>Pseudomonadota</taxon>
        <taxon>Gammaproteobacteria</taxon>
        <taxon>Enterobacterales</taxon>
        <taxon>Erwiniaceae</taxon>
        <taxon>Erwinia</taxon>
    </lineage>
</organism>
<protein>
    <recommendedName>
        <fullName evidence="1">Fluoride-specific ion channel FluC</fullName>
    </recommendedName>
</protein>
<reference key="1">
    <citation type="journal article" date="2008" name="Environ. Microbiol.">
        <title>The genome of Erwinia tasmaniensis strain Et1/99, a non-pathogenic bacterium in the genus Erwinia.</title>
        <authorList>
            <person name="Kube M."/>
            <person name="Migdoll A.M."/>
            <person name="Mueller I."/>
            <person name="Kuhl H."/>
            <person name="Beck A."/>
            <person name="Reinhardt R."/>
            <person name="Geider K."/>
        </authorList>
    </citation>
    <scope>NUCLEOTIDE SEQUENCE [LARGE SCALE GENOMIC DNA]</scope>
    <source>
        <strain>DSM 17950 / CFBP 7177 / CIP 109463 / NCPPB 4357 / Et1/99</strain>
    </source>
</reference>
<evidence type="ECO:0000255" key="1">
    <source>
        <dbReference type="HAMAP-Rule" id="MF_00454"/>
    </source>
</evidence>
<dbReference type="EMBL" id="CU468135">
    <property type="protein sequence ID" value="CAO97634.1"/>
    <property type="molecule type" value="Genomic_DNA"/>
</dbReference>
<dbReference type="RefSeq" id="WP_012442299.1">
    <property type="nucleotide sequence ID" value="NC_010694.1"/>
</dbReference>
<dbReference type="SMR" id="B2VHL9"/>
<dbReference type="STRING" id="465817.ETA_25880"/>
<dbReference type="KEGG" id="eta:ETA_25880"/>
<dbReference type="eggNOG" id="COG0239">
    <property type="taxonomic scope" value="Bacteria"/>
</dbReference>
<dbReference type="HOGENOM" id="CLU_114342_3_3_6"/>
<dbReference type="OrthoDB" id="9806299at2"/>
<dbReference type="Proteomes" id="UP000001726">
    <property type="component" value="Chromosome"/>
</dbReference>
<dbReference type="GO" id="GO:0005886">
    <property type="term" value="C:plasma membrane"/>
    <property type="evidence" value="ECO:0007669"/>
    <property type="project" value="UniProtKB-SubCell"/>
</dbReference>
<dbReference type="GO" id="GO:0062054">
    <property type="term" value="F:fluoride channel activity"/>
    <property type="evidence" value="ECO:0007669"/>
    <property type="project" value="UniProtKB-UniRule"/>
</dbReference>
<dbReference type="GO" id="GO:0046872">
    <property type="term" value="F:metal ion binding"/>
    <property type="evidence" value="ECO:0007669"/>
    <property type="project" value="UniProtKB-KW"/>
</dbReference>
<dbReference type="GO" id="GO:0140114">
    <property type="term" value="P:cellular detoxification of fluoride"/>
    <property type="evidence" value="ECO:0007669"/>
    <property type="project" value="UniProtKB-UniRule"/>
</dbReference>
<dbReference type="HAMAP" id="MF_00454">
    <property type="entry name" value="FluC"/>
    <property type="match status" value="1"/>
</dbReference>
<dbReference type="InterPro" id="IPR003691">
    <property type="entry name" value="FluC"/>
</dbReference>
<dbReference type="NCBIfam" id="TIGR00494">
    <property type="entry name" value="crcB"/>
    <property type="match status" value="1"/>
</dbReference>
<dbReference type="NCBIfam" id="NF010792">
    <property type="entry name" value="PRK14196.1"/>
    <property type="match status" value="1"/>
</dbReference>
<dbReference type="PANTHER" id="PTHR28259">
    <property type="entry name" value="FLUORIDE EXPORT PROTEIN 1-RELATED"/>
    <property type="match status" value="1"/>
</dbReference>
<dbReference type="PANTHER" id="PTHR28259:SF1">
    <property type="entry name" value="FLUORIDE EXPORT PROTEIN 1-RELATED"/>
    <property type="match status" value="1"/>
</dbReference>
<dbReference type="Pfam" id="PF02537">
    <property type="entry name" value="CRCB"/>
    <property type="match status" value="1"/>
</dbReference>
<gene>
    <name evidence="1" type="primary">fluC</name>
    <name evidence="1" type="synonym">crcB</name>
    <name type="ordered locus">ETA_25880</name>
</gene>